<gene>
    <name evidence="1" type="primary">esxR</name>
    <name type="ordered locus">MT3104</name>
</gene>
<dbReference type="EMBL" id="AE000516">
    <property type="protein sequence ID" value="AAK47433.1"/>
    <property type="molecule type" value="Genomic_DNA"/>
</dbReference>
<dbReference type="PIR" id="F70857">
    <property type="entry name" value="F70857"/>
</dbReference>
<dbReference type="RefSeq" id="WP_003415340.1">
    <property type="nucleotide sequence ID" value="NZ_KK341227.1"/>
</dbReference>
<dbReference type="SMR" id="P9WNI8"/>
<dbReference type="KEGG" id="mtc:MT3104"/>
<dbReference type="PATRIC" id="fig|83331.31.peg.3345"/>
<dbReference type="HOGENOM" id="CLU_2451485_0_0_11"/>
<dbReference type="Proteomes" id="UP000001020">
    <property type="component" value="Chromosome"/>
</dbReference>
<dbReference type="GO" id="GO:0005576">
    <property type="term" value="C:extracellular region"/>
    <property type="evidence" value="ECO:0007669"/>
    <property type="project" value="UniProtKB-SubCell"/>
</dbReference>
<dbReference type="FunFam" id="1.10.287.1060:FF:000016">
    <property type="entry name" value="ESAT-6-like protein"/>
    <property type="match status" value="1"/>
</dbReference>
<dbReference type="Gene3D" id="1.10.287.1060">
    <property type="entry name" value="ESAT-6-like"/>
    <property type="match status" value="1"/>
</dbReference>
<dbReference type="InterPro" id="IPR036689">
    <property type="entry name" value="ESAT-6-like_sf"/>
</dbReference>
<dbReference type="InterPro" id="IPR010310">
    <property type="entry name" value="T7SS_ESAT-6-like"/>
</dbReference>
<dbReference type="NCBIfam" id="TIGR03930">
    <property type="entry name" value="WXG100_ESAT6"/>
    <property type="match status" value="1"/>
</dbReference>
<dbReference type="Pfam" id="PF06013">
    <property type="entry name" value="WXG100"/>
    <property type="match status" value="1"/>
</dbReference>
<dbReference type="SUPFAM" id="SSF140453">
    <property type="entry name" value="EsxAB dimer-like"/>
    <property type="match status" value="1"/>
</dbReference>
<sequence>MSQIMYNYPAMMAHAGDMAGYAGTLQSLGADIASEQAVLSSAWQGDTGITYQGWQTQWNQALEDLVRAYQSMSGTHESNTMAMLARDGAEAAKWGG</sequence>
<name>ESXR_MYCTO</name>
<feature type="chain" id="PRO_0000427119" description="ESAT-6-like protein EsxR">
    <location>
        <begin position="1"/>
        <end position="96"/>
    </location>
</feature>
<proteinExistence type="inferred from homology"/>
<protein>
    <recommendedName>
        <fullName evidence="1">ESAT-6-like protein EsxR</fullName>
    </recommendedName>
</protein>
<evidence type="ECO:0000250" key="1">
    <source>
        <dbReference type="UniProtKB" id="P9WNI9"/>
    </source>
</evidence>
<evidence type="ECO:0000305" key="2"/>
<keyword id="KW-1185">Reference proteome</keyword>
<keyword id="KW-0964">Secreted</keyword>
<accession>P9WNI8</accession>
<accession>L0TBJ7</accession>
<accession>O53266</accession>
<accession>P64093</accession>
<comment type="subcellular location">
    <subcellularLocation>
        <location evidence="1">Secreted</location>
    </subcellularLocation>
    <text evidence="1">Probably secreted via the ESX-3 / type VII secretion system (T7SS).</text>
</comment>
<comment type="similarity">
    <text evidence="2">Belongs to the WXG100 family. ESAT-6 subfamily.</text>
</comment>
<organism>
    <name type="scientific">Mycobacterium tuberculosis (strain CDC 1551 / Oshkosh)</name>
    <dbReference type="NCBI Taxonomy" id="83331"/>
    <lineage>
        <taxon>Bacteria</taxon>
        <taxon>Bacillati</taxon>
        <taxon>Actinomycetota</taxon>
        <taxon>Actinomycetes</taxon>
        <taxon>Mycobacteriales</taxon>
        <taxon>Mycobacteriaceae</taxon>
        <taxon>Mycobacterium</taxon>
        <taxon>Mycobacterium tuberculosis complex</taxon>
    </lineage>
</organism>
<reference key="1">
    <citation type="journal article" date="2002" name="J. Bacteriol.">
        <title>Whole-genome comparison of Mycobacterium tuberculosis clinical and laboratory strains.</title>
        <authorList>
            <person name="Fleischmann R.D."/>
            <person name="Alland D."/>
            <person name="Eisen J.A."/>
            <person name="Carpenter L."/>
            <person name="White O."/>
            <person name="Peterson J.D."/>
            <person name="DeBoy R.T."/>
            <person name="Dodson R.J."/>
            <person name="Gwinn M.L."/>
            <person name="Haft D.H."/>
            <person name="Hickey E.K."/>
            <person name="Kolonay J.F."/>
            <person name="Nelson W.C."/>
            <person name="Umayam L.A."/>
            <person name="Ermolaeva M.D."/>
            <person name="Salzberg S.L."/>
            <person name="Delcher A."/>
            <person name="Utterback T.R."/>
            <person name="Weidman J.F."/>
            <person name="Khouri H.M."/>
            <person name="Gill J."/>
            <person name="Mikula A."/>
            <person name="Bishai W."/>
            <person name="Jacobs W.R. Jr."/>
            <person name="Venter J.C."/>
            <person name="Fraser C.M."/>
        </authorList>
    </citation>
    <scope>NUCLEOTIDE SEQUENCE [LARGE SCALE GENOMIC DNA]</scope>
    <source>
        <strain>CDC 1551 / Oshkosh</strain>
    </source>
</reference>